<keyword id="KW-0963">Cytoplasm</keyword>
<keyword id="KW-0819">tRNA processing</keyword>
<protein>
    <recommendedName>
        <fullName evidence="1">Protein TusB</fullName>
    </recommendedName>
    <alternativeName>
        <fullName evidence="1">tRNA 2-thiouridine synthesizing protein B</fullName>
    </alternativeName>
</protein>
<proteinExistence type="inferred from homology"/>
<reference key="1">
    <citation type="journal article" date="2006" name="PLoS Genet.">
        <title>The complete genome sequence and comparative genome analysis of the high pathogenicity Yersinia enterocolitica strain 8081.</title>
        <authorList>
            <person name="Thomson N.R."/>
            <person name="Howard S."/>
            <person name="Wren B.W."/>
            <person name="Holden M.T.G."/>
            <person name="Crossman L."/>
            <person name="Challis G.L."/>
            <person name="Churcher C."/>
            <person name="Mungall K."/>
            <person name="Brooks K."/>
            <person name="Chillingworth T."/>
            <person name="Feltwell T."/>
            <person name="Abdellah Z."/>
            <person name="Hauser H."/>
            <person name="Jagels K."/>
            <person name="Maddison M."/>
            <person name="Moule S."/>
            <person name="Sanders M."/>
            <person name="Whitehead S."/>
            <person name="Quail M.A."/>
            <person name="Dougan G."/>
            <person name="Parkhill J."/>
            <person name="Prentice M.B."/>
        </authorList>
    </citation>
    <scope>NUCLEOTIDE SEQUENCE [LARGE SCALE GENOMIC DNA]</scope>
    <source>
        <strain>NCTC 13174 / 8081</strain>
    </source>
</reference>
<gene>
    <name evidence="1" type="primary">tusB</name>
    <name type="ordered locus">YE3931</name>
</gene>
<name>TUSB_YERE8</name>
<evidence type="ECO:0000255" key="1">
    <source>
        <dbReference type="HAMAP-Rule" id="MF_01564"/>
    </source>
</evidence>
<comment type="function">
    <text evidence="1">Part of a sulfur-relay system required for 2-thiolation of 5-methylaminomethyl-2-thiouridine (mnm(5)s(2)U) at tRNA wobble positions.</text>
</comment>
<comment type="subunit">
    <text evidence="1">Heterohexamer, formed by a dimer of trimers. The hexameric TusBCD complex contains 2 copies each of TusB, TusC and TusD. The TusBCD complex interacts with TusE.</text>
</comment>
<comment type="subcellular location">
    <subcellularLocation>
        <location evidence="1">Cytoplasm</location>
    </subcellularLocation>
</comment>
<comment type="similarity">
    <text evidence="1">Belongs to the DsrH/TusB family.</text>
</comment>
<dbReference type="EMBL" id="AM286415">
    <property type="protein sequence ID" value="CAL13950.1"/>
    <property type="molecule type" value="Genomic_DNA"/>
</dbReference>
<dbReference type="RefSeq" id="WP_005174639.1">
    <property type="nucleotide sequence ID" value="NC_008800.1"/>
</dbReference>
<dbReference type="RefSeq" id="YP_001008076.1">
    <property type="nucleotide sequence ID" value="NC_008800.1"/>
</dbReference>
<dbReference type="SMR" id="A1JS58"/>
<dbReference type="KEGG" id="yen:YE3931"/>
<dbReference type="PATRIC" id="fig|393305.7.peg.4181"/>
<dbReference type="eggNOG" id="COG2168">
    <property type="taxonomic scope" value="Bacteria"/>
</dbReference>
<dbReference type="HOGENOM" id="CLU_166087_2_1_6"/>
<dbReference type="OrthoDB" id="9795117at2"/>
<dbReference type="Proteomes" id="UP000000642">
    <property type="component" value="Chromosome"/>
</dbReference>
<dbReference type="GO" id="GO:1990228">
    <property type="term" value="C:sulfurtransferase complex"/>
    <property type="evidence" value="ECO:0007669"/>
    <property type="project" value="TreeGrafter"/>
</dbReference>
<dbReference type="GO" id="GO:0002143">
    <property type="term" value="P:tRNA wobble position uridine thiolation"/>
    <property type="evidence" value="ECO:0007669"/>
    <property type="project" value="InterPro"/>
</dbReference>
<dbReference type="Gene3D" id="3.40.1260.10">
    <property type="entry name" value="DsrEFH-like"/>
    <property type="match status" value="1"/>
</dbReference>
<dbReference type="HAMAP" id="MF_01564">
    <property type="entry name" value="Thiourid_synth_B"/>
    <property type="match status" value="1"/>
</dbReference>
<dbReference type="InterPro" id="IPR027396">
    <property type="entry name" value="DsrEFH-like"/>
</dbReference>
<dbReference type="InterPro" id="IPR023526">
    <property type="entry name" value="Sulphur_relay_TusB"/>
</dbReference>
<dbReference type="InterPro" id="IPR007215">
    <property type="entry name" value="Sulphur_relay_TusB/DsrH"/>
</dbReference>
<dbReference type="NCBIfam" id="NF010035">
    <property type="entry name" value="PRK13510.1"/>
    <property type="match status" value="1"/>
</dbReference>
<dbReference type="NCBIfam" id="TIGR03011">
    <property type="entry name" value="sulf_tusB_dsrH"/>
    <property type="match status" value="1"/>
</dbReference>
<dbReference type="PANTHER" id="PTHR37526">
    <property type="entry name" value="PROTEIN TUSB"/>
    <property type="match status" value="1"/>
</dbReference>
<dbReference type="PANTHER" id="PTHR37526:SF1">
    <property type="entry name" value="PROTEIN TUSB"/>
    <property type="match status" value="1"/>
</dbReference>
<dbReference type="Pfam" id="PF04077">
    <property type="entry name" value="DsrH"/>
    <property type="match status" value="1"/>
</dbReference>
<dbReference type="SUPFAM" id="SSF75169">
    <property type="entry name" value="DsrEFH-like"/>
    <property type="match status" value="1"/>
</dbReference>
<organism>
    <name type="scientific">Yersinia enterocolitica serotype O:8 / biotype 1B (strain NCTC 13174 / 8081)</name>
    <dbReference type="NCBI Taxonomy" id="393305"/>
    <lineage>
        <taxon>Bacteria</taxon>
        <taxon>Pseudomonadati</taxon>
        <taxon>Pseudomonadota</taxon>
        <taxon>Gammaproteobacteria</taxon>
        <taxon>Enterobacterales</taxon>
        <taxon>Yersiniaceae</taxon>
        <taxon>Yersinia</taxon>
    </lineage>
</organism>
<sequence length="95" mass="10562">MLFTVSHSPYHCDLSALLRLVTSEDAILFLQDGVMAVLKNSESLNLLLNNQASLFVLEDDVIARGLCGQISDSAMLIGYTHFVDLTLKHQQQLAW</sequence>
<accession>A1JS58</accession>
<feature type="chain" id="PRO_1000069062" description="Protein TusB">
    <location>
        <begin position="1"/>
        <end position="95"/>
    </location>
</feature>